<comment type="function">
    <text evidence="1">Binds 23S rRNA and is also seen to make contacts with the A and possibly P site tRNAs.</text>
</comment>
<comment type="subunit">
    <text evidence="1">Part of the 50S ribosomal subunit.</text>
</comment>
<comment type="similarity">
    <text evidence="1">Belongs to the universal ribosomal protein uL16 family.</text>
</comment>
<organism>
    <name type="scientific">Pseudomonas putida (strain W619)</name>
    <dbReference type="NCBI Taxonomy" id="390235"/>
    <lineage>
        <taxon>Bacteria</taxon>
        <taxon>Pseudomonadati</taxon>
        <taxon>Pseudomonadota</taxon>
        <taxon>Gammaproteobacteria</taxon>
        <taxon>Pseudomonadales</taxon>
        <taxon>Pseudomonadaceae</taxon>
        <taxon>Pseudomonas</taxon>
    </lineage>
</organism>
<name>RL16_PSEPW</name>
<protein>
    <recommendedName>
        <fullName evidence="1">Large ribosomal subunit protein uL16</fullName>
    </recommendedName>
    <alternativeName>
        <fullName evidence="2">50S ribosomal protein L16</fullName>
    </alternativeName>
</protein>
<accession>B1JDX7</accession>
<evidence type="ECO:0000255" key="1">
    <source>
        <dbReference type="HAMAP-Rule" id="MF_01342"/>
    </source>
</evidence>
<evidence type="ECO:0000305" key="2"/>
<dbReference type="EMBL" id="CP000949">
    <property type="protein sequence ID" value="ACA75218.1"/>
    <property type="molecule type" value="Genomic_DNA"/>
</dbReference>
<dbReference type="SMR" id="B1JDX7"/>
<dbReference type="STRING" id="390235.PputW619_4742"/>
<dbReference type="KEGG" id="ppw:PputW619_4742"/>
<dbReference type="eggNOG" id="COG0197">
    <property type="taxonomic scope" value="Bacteria"/>
</dbReference>
<dbReference type="HOGENOM" id="CLU_078858_2_1_6"/>
<dbReference type="OrthoDB" id="9802589at2"/>
<dbReference type="GO" id="GO:0022625">
    <property type="term" value="C:cytosolic large ribosomal subunit"/>
    <property type="evidence" value="ECO:0007669"/>
    <property type="project" value="TreeGrafter"/>
</dbReference>
<dbReference type="GO" id="GO:0019843">
    <property type="term" value="F:rRNA binding"/>
    <property type="evidence" value="ECO:0007669"/>
    <property type="project" value="UniProtKB-UniRule"/>
</dbReference>
<dbReference type="GO" id="GO:0003735">
    <property type="term" value="F:structural constituent of ribosome"/>
    <property type="evidence" value="ECO:0007669"/>
    <property type="project" value="InterPro"/>
</dbReference>
<dbReference type="GO" id="GO:0000049">
    <property type="term" value="F:tRNA binding"/>
    <property type="evidence" value="ECO:0007669"/>
    <property type="project" value="UniProtKB-KW"/>
</dbReference>
<dbReference type="GO" id="GO:0006412">
    <property type="term" value="P:translation"/>
    <property type="evidence" value="ECO:0007669"/>
    <property type="project" value="UniProtKB-UniRule"/>
</dbReference>
<dbReference type="CDD" id="cd01433">
    <property type="entry name" value="Ribosomal_L16_L10e"/>
    <property type="match status" value="1"/>
</dbReference>
<dbReference type="FunFam" id="3.90.1170.10:FF:000001">
    <property type="entry name" value="50S ribosomal protein L16"/>
    <property type="match status" value="1"/>
</dbReference>
<dbReference type="Gene3D" id="3.90.1170.10">
    <property type="entry name" value="Ribosomal protein L10e/L16"/>
    <property type="match status" value="1"/>
</dbReference>
<dbReference type="HAMAP" id="MF_01342">
    <property type="entry name" value="Ribosomal_uL16"/>
    <property type="match status" value="1"/>
</dbReference>
<dbReference type="InterPro" id="IPR047873">
    <property type="entry name" value="Ribosomal_uL16"/>
</dbReference>
<dbReference type="InterPro" id="IPR000114">
    <property type="entry name" value="Ribosomal_uL16_bact-type"/>
</dbReference>
<dbReference type="InterPro" id="IPR020798">
    <property type="entry name" value="Ribosomal_uL16_CS"/>
</dbReference>
<dbReference type="InterPro" id="IPR016180">
    <property type="entry name" value="Ribosomal_uL16_dom"/>
</dbReference>
<dbReference type="InterPro" id="IPR036920">
    <property type="entry name" value="Ribosomal_uL16_sf"/>
</dbReference>
<dbReference type="NCBIfam" id="TIGR01164">
    <property type="entry name" value="rplP_bact"/>
    <property type="match status" value="1"/>
</dbReference>
<dbReference type="PANTHER" id="PTHR12220">
    <property type="entry name" value="50S/60S RIBOSOMAL PROTEIN L16"/>
    <property type="match status" value="1"/>
</dbReference>
<dbReference type="PANTHER" id="PTHR12220:SF13">
    <property type="entry name" value="LARGE RIBOSOMAL SUBUNIT PROTEIN UL16M"/>
    <property type="match status" value="1"/>
</dbReference>
<dbReference type="Pfam" id="PF00252">
    <property type="entry name" value="Ribosomal_L16"/>
    <property type="match status" value="1"/>
</dbReference>
<dbReference type="PRINTS" id="PR00060">
    <property type="entry name" value="RIBOSOMALL16"/>
</dbReference>
<dbReference type="SUPFAM" id="SSF54686">
    <property type="entry name" value="Ribosomal protein L16p/L10e"/>
    <property type="match status" value="1"/>
</dbReference>
<dbReference type="PROSITE" id="PS00586">
    <property type="entry name" value="RIBOSOMAL_L16_1"/>
    <property type="match status" value="1"/>
</dbReference>
<dbReference type="PROSITE" id="PS00701">
    <property type="entry name" value="RIBOSOMAL_L16_2"/>
    <property type="match status" value="1"/>
</dbReference>
<reference key="1">
    <citation type="submission" date="2008-02" db="EMBL/GenBank/DDBJ databases">
        <title>Complete sequence of Pseudomonas putida W619.</title>
        <authorList>
            <person name="Copeland A."/>
            <person name="Lucas S."/>
            <person name="Lapidus A."/>
            <person name="Barry K."/>
            <person name="Detter J.C."/>
            <person name="Glavina del Rio T."/>
            <person name="Dalin E."/>
            <person name="Tice H."/>
            <person name="Pitluck S."/>
            <person name="Chain P."/>
            <person name="Malfatti S."/>
            <person name="Shin M."/>
            <person name="Vergez L."/>
            <person name="Schmutz J."/>
            <person name="Larimer F."/>
            <person name="Land M."/>
            <person name="Hauser L."/>
            <person name="Kyrpides N."/>
            <person name="Kim E."/>
            <person name="Taghavi S."/>
            <person name="Vangronsveld D."/>
            <person name="van der Lelie D."/>
            <person name="Richardson P."/>
        </authorList>
    </citation>
    <scope>NUCLEOTIDE SEQUENCE [LARGE SCALE GENOMIC DNA]</scope>
    <source>
        <strain>W619</strain>
    </source>
</reference>
<gene>
    <name evidence="1" type="primary">rplP</name>
    <name type="ordered locus">PputW619_4742</name>
</gene>
<keyword id="KW-0687">Ribonucleoprotein</keyword>
<keyword id="KW-0689">Ribosomal protein</keyword>
<keyword id="KW-0694">RNA-binding</keyword>
<keyword id="KW-0699">rRNA-binding</keyword>
<keyword id="KW-0820">tRNA-binding</keyword>
<sequence length="137" mass="15373">MLQPKRTKFRKQMTGHNRGLALRGSKVSFGEFALKAVARGRLTARQIESARRALTRHVKRGGKIWIRVFPDKPISKKPLEVRMGKGKGSVEYWVAQIQPGKVLYEIEGVSEELAREAFALAAAKLPLATSFVKRTVM</sequence>
<proteinExistence type="inferred from homology"/>
<feature type="chain" id="PRO_1000143014" description="Large ribosomal subunit protein uL16">
    <location>
        <begin position="1"/>
        <end position="137"/>
    </location>
</feature>